<feature type="chain" id="PRO_0000186702" description="PTS system fructose-like EIIB component 1">
    <location>
        <begin position="1"/>
        <end position="108"/>
    </location>
</feature>
<feature type="domain" description="PTS EIIB type-2" evidence="2">
    <location>
        <begin position="1"/>
        <end position="104"/>
    </location>
</feature>
<feature type="active site" description="Phosphocysteine intermediate" evidence="1 3">
    <location>
        <position position="11"/>
    </location>
</feature>
<feature type="modified residue" description="Phosphocysteine; by EIIA" evidence="2">
    <location>
        <position position="11"/>
    </location>
</feature>
<name>PTFB1_ECO57</name>
<dbReference type="EC" id="2.7.1.202" evidence="1"/>
<dbReference type="EMBL" id="AE005174">
    <property type="protein sequence ID" value="AAG57513.1"/>
    <property type="molecule type" value="Genomic_DNA"/>
</dbReference>
<dbReference type="EMBL" id="BA000007">
    <property type="protein sequence ID" value="BAB36690.1"/>
    <property type="molecule type" value="Genomic_DNA"/>
</dbReference>
<dbReference type="PIR" id="C91037">
    <property type="entry name" value="C91037"/>
</dbReference>
<dbReference type="PIR" id="E85881">
    <property type="entry name" value="E85881"/>
</dbReference>
<dbReference type="RefSeq" id="NP_311294.1">
    <property type="nucleotide sequence ID" value="NC_002695.1"/>
</dbReference>
<dbReference type="RefSeq" id="WP_000038456.1">
    <property type="nucleotide sequence ID" value="NZ_VOAI01000001.1"/>
</dbReference>
<dbReference type="BMRB" id="P69810"/>
<dbReference type="SMR" id="P69810"/>
<dbReference type="STRING" id="155864.Z3653"/>
<dbReference type="GeneID" id="915630"/>
<dbReference type="KEGG" id="ece:Z3653"/>
<dbReference type="KEGG" id="ecs:ECs_3267"/>
<dbReference type="PATRIC" id="fig|386585.9.peg.3411"/>
<dbReference type="eggNOG" id="COG1445">
    <property type="taxonomic scope" value="Bacteria"/>
</dbReference>
<dbReference type="HOGENOM" id="CLU_013155_2_1_6"/>
<dbReference type="OMA" id="IAVCACP"/>
<dbReference type="Proteomes" id="UP000000558">
    <property type="component" value="Chromosome"/>
</dbReference>
<dbReference type="Proteomes" id="UP000002519">
    <property type="component" value="Chromosome"/>
</dbReference>
<dbReference type="GO" id="GO:0005737">
    <property type="term" value="C:cytoplasm"/>
    <property type="evidence" value="ECO:0007669"/>
    <property type="project" value="UniProtKB-SubCell"/>
</dbReference>
<dbReference type="GO" id="GO:0005886">
    <property type="term" value="C:plasma membrane"/>
    <property type="evidence" value="ECO:0007669"/>
    <property type="project" value="TreeGrafter"/>
</dbReference>
<dbReference type="GO" id="GO:0016301">
    <property type="term" value="F:kinase activity"/>
    <property type="evidence" value="ECO:0007669"/>
    <property type="project" value="UniProtKB-KW"/>
</dbReference>
<dbReference type="GO" id="GO:0022877">
    <property type="term" value="F:protein-N(PI)-phosphohistidine-fructose phosphotransferase system transporter activity"/>
    <property type="evidence" value="ECO:0007669"/>
    <property type="project" value="InterPro"/>
</dbReference>
<dbReference type="GO" id="GO:0090582">
    <property type="term" value="F:protein-phosphocysteine-D-fructose-phosphotransferase system transporter activity"/>
    <property type="evidence" value="ECO:0000250"/>
    <property type="project" value="UniProtKB"/>
</dbReference>
<dbReference type="GO" id="GO:0009401">
    <property type="term" value="P:phosphoenolpyruvate-dependent sugar phosphotransferase system"/>
    <property type="evidence" value="ECO:0000250"/>
    <property type="project" value="UniProtKB"/>
</dbReference>
<dbReference type="CDD" id="cd05569">
    <property type="entry name" value="PTS_IIB_fructose"/>
    <property type="match status" value="1"/>
</dbReference>
<dbReference type="FunFam" id="3.40.50.2300:FF:000092">
    <property type="entry name" value="Fructose-like phosphotransferase enzyme IIB component 1"/>
    <property type="match status" value="1"/>
</dbReference>
<dbReference type="Gene3D" id="3.40.50.2300">
    <property type="match status" value="1"/>
</dbReference>
<dbReference type="InterPro" id="IPR050864">
    <property type="entry name" value="Bacterial_PTS_Sugar_Transport"/>
</dbReference>
<dbReference type="InterPro" id="IPR036095">
    <property type="entry name" value="PTS_EIIB-like_sf"/>
</dbReference>
<dbReference type="InterPro" id="IPR013011">
    <property type="entry name" value="PTS_EIIB_2"/>
</dbReference>
<dbReference type="InterPro" id="IPR003501">
    <property type="entry name" value="PTS_EIIB_2/3"/>
</dbReference>
<dbReference type="InterPro" id="IPR003353">
    <property type="entry name" value="PTS_IIB_fruc"/>
</dbReference>
<dbReference type="NCBIfam" id="TIGR00829">
    <property type="entry name" value="FRU"/>
    <property type="match status" value="1"/>
</dbReference>
<dbReference type="PANTHER" id="PTHR30505">
    <property type="entry name" value="FRUCTOSE-LIKE PERMEASE"/>
    <property type="match status" value="1"/>
</dbReference>
<dbReference type="PANTHER" id="PTHR30505:SF0">
    <property type="entry name" value="FRUCTOSE-LIKE PTS SYSTEM EIIBC COMPONENT-RELATED"/>
    <property type="match status" value="1"/>
</dbReference>
<dbReference type="Pfam" id="PF02302">
    <property type="entry name" value="PTS_IIB"/>
    <property type="match status" value="1"/>
</dbReference>
<dbReference type="SUPFAM" id="SSF52794">
    <property type="entry name" value="PTS system IIB component-like"/>
    <property type="match status" value="1"/>
</dbReference>
<dbReference type="PROSITE" id="PS51099">
    <property type="entry name" value="PTS_EIIB_TYPE_2"/>
    <property type="match status" value="1"/>
</dbReference>
<gene>
    <name type="primary">fryB</name>
    <name type="ordered locus">Z3653</name>
    <name type="ordered locus">ECs3267</name>
</gene>
<comment type="function">
    <text evidence="1">The phosphoenolpyruvate-dependent sugar phosphotransferase system (sugar PTS), a major carbohydrate active transport system, catalyzes the phosphorylation of incoming sugar substrates concomitantly with their translocation across the cell membrane. The enzyme II FryABC PTS system is involved in fructose transport.</text>
</comment>
<comment type="catalytic activity">
    <reaction evidence="1">
        <text>D-fructose(out) + N(pros)-phospho-L-histidyl-[protein] = D-fructose 1-phosphate(in) + L-histidyl-[protein]</text>
        <dbReference type="Rhea" id="RHEA:49252"/>
        <dbReference type="Rhea" id="RHEA-COMP:9745"/>
        <dbReference type="Rhea" id="RHEA-COMP:9746"/>
        <dbReference type="ChEBI" id="CHEBI:29979"/>
        <dbReference type="ChEBI" id="CHEBI:37721"/>
        <dbReference type="ChEBI" id="CHEBI:58674"/>
        <dbReference type="ChEBI" id="CHEBI:64837"/>
        <dbReference type="EC" id="2.7.1.202"/>
    </reaction>
</comment>
<comment type="subcellular location">
    <subcellularLocation>
        <location evidence="3">Cytoplasm</location>
    </subcellularLocation>
</comment>
<comment type="domain">
    <text evidence="2">The PTS EIIB type-2 domain is phosphorylated by phospho-EIIA on a cysteinyl residue. Then, it transfers the phosphoryl group to the sugar substrate concomitantly with the sugar uptake processed by the PTS EIIC type-2 domain.</text>
</comment>
<sequence length="108" mass="11735">MSKKLIALCACPMGLAHTFMAAQALEEAAVEAGYEVKIETQGADGIQNRLTAQDIAEATIIIHSVAVTPEDNERFESRDVYEITLQDAIKNAAGIIKEIEEMIASEQQ</sequence>
<proteinExistence type="inferred from homology"/>
<protein>
    <recommendedName>
        <fullName evidence="1">PTS system fructose-like EIIB component 1</fullName>
        <ecNumber evidence="1">2.7.1.202</ecNumber>
    </recommendedName>
    <alternativeName>
        <fullName evidence="1">Fructose-like phosphotransferase enzyme IIB component 1</fullName>
    </alternativeName>
</protein>
<evidence type="ECO:0000250" key="1">
    <source>
        <dbReference type="UniProtKB" id="P20966"/>
    </source>
</evidence>
<evidence type="ECO:0000255" key="2">
    <source>
        <dbReference type="PROSITE-ProRule" id="PRU00422"/>
    </source>
</evidence>
<evidence type="ECO:0000305" key="3"/>
<accession>P69810</accession>
<accession>P76525</accession>
<accession>P78264</accession>
<reference key="1">
    <citation type="journal article" date="2001" name="Nature">
        <title>Genome sequence of enterohaemorrhagic Escherichia coli O157:H7.</title>
        <authorList>
            <person name="Perna N.T."/>
            <person name="Plunkett G. III"/>
            <person name="Burland V."/>
            <person name="Mau B."/>
            <person name="Glasner J.D."/>
            <person name="Rose D.J."/>
            <person name="Mayhew G.F."/>
            <person name="Evans P.S."/>
            <person name="Gregor J."/>
            <person name="Kirkpatrick H.A."/>
            <person name="Posfai G."/>
            <person name="Hackett J."/>
            <person name="Klink S."/>
            <person name="Boutin A."/>
            <person name="Shao Y."/>
            <person name="Miller L."/>
            <person name="Grotbeck E.J."/>
            <person name="Davis N.W."/>
            <person name="Lim A."/>
            <person name="Dimalanta E.T."/>
            <person name="Potamousis K."/>
            <person name="Apodaca J."/>
            <person name="Anantharaman T.S."/>
            <person name="Lin J."/>
            <person name="Yen G."/>
            <person name="Schwartz D.C."/>
            <person name="Welch R.A."/>
            <person name="Blattner F.R."/>
        </authorList>
    </citation>
    <scope>NUCLEOTIDE SEQUENCE [LARGE SCALE GENOMIC DNA]</scope>
    <source>
        <strain>O157:H7 / EDL933 / ATCC 700927 / EHEC</strain>
    </source>
</reference>
<reference key="2">
    <citation type="journal article" date="2001" name="DNA Res.">
        <title>Complete genome sequence of enterohemorrhagic Escherichia coli O157:H7 and genomic comparison with a laboratory strain K-12.</title>
        <authorList>
            <person name="Hayashi T."/>
            <person name="Makino K."/>
            <person name="Ohnishi M."/>
            <person name="Kurokawa K."/>
            <person name="Ishii K."/>
            <person name="Yokoyama K."/>
            <person name="Han C.-G."/>
            <person name="Ohtsubo E."/>
            <person name="Nakayama K."/>
            <person name="Murata T."/>
            <person name="Tanaka M."/>
            <person name="Tobe T."/>
            <person name="Iida T."/>
            <person name="Takami H."/>
            <person name="Honda T."/>
            <person name="Sasakawa C."/>
            <person name="Ogasawara N."/>
            <person name="Yasunaga T."/>
            <person name="Kuhara S."/>
            <person name="Shiba T."/>
            <person name="Hattori M."/>
            <person name="Shinagawa H."/>
        </authorList>
    </citation>
    <scope>NUCLEOTIDE SEQUENCE [LARGE SCALE GENOMIC DNA]</scope>
    <source>
        <strain>O157:H7 / Sakai / RIMD 0509952 / EHEC</strain>
    </source>
</reference>
<keyword id="KW-0963">Cytoplasm</keyword>
<keyword id="KW-0418">Kinase</keyword>
<keyword id="KW-0597">Phosphoprotein</keyword>
<keyword id="KW-0598">Phosphotransferase system</keyword>
<keyword id="KW-1185">Reference proteome</keyword>
<keyword id="KW-0762">Sugar transport</keyword>
<keyword id="KW-0808">Transferase</keyword>
<keyword id="KW-0813">Transport</keyword>
<organism>
    <name type="scientific">Escherichia coli O157:H7</name>
    <dbReference type="NCBI Taxonomy" id="83334"/>
    <lineage>
        <taxon>Bacteria</taxon>
        <taxon>Pseudomonadati</taxon>
        <taxon>Pseudomonadota</taxon>
        <taxon>Gammaproteobacteria</taxon>
        <taxon>Enterobacterales</taxon>
        <taxon>Enterobacteriaceae</taxon>
        <taxon>Escherichia</taxon>
    </lineage>
</organism>